<keyword id="KW-0963">Cytoplasm</keyword>
<keyword id="KW-0456">Lyase</keyword>
<keyword id="KW-0670">Pyruvate</keyword>
<keyword id="KW-0831">Ubiquinone biosynthesis</keyword>
<comment type="function">
    <text evidence="1">Removes the pyruvyl group from chorismate, with concomitant aromatization of the ring, to provide 4-hydroxybenzoate (4HB) for the ubiquinone pathway.</text>
</comment>
<comment type="catalytic activity">
    <reaction evidence="1">
        <text>chorismate = 4-hydroxybenzoate + pyruvate</text>
        <dbReference type="Rhea" id="RHEA:16505"/>
        <dbReference type="ChEBI" id="CHEBI:15361"/>
        <dbReference type="ChEBI" id="CHEBI:17879"/>
        <dbReference type="ChEBI" id="CHEBI:29748"/>
        <dbReference type="EC" id="4.1.3.40"/>
    </reaction>
</comment>
<comment type="pathway">
    <text evidence="1">Cofactor biosynthesis; ubiquinone biosynthesis.</text>
</comment>
<comment type="subunit">
    <text evidence="1">Monomer.</text>
</comment>
<comment type="subcellular location">
    <subcellularLocation>
        <location evidence="1">Cytoplasm</location>
    </subcellularLocation>
</comment>
<comment type="similarity">
    <text evidence="1">Belongs to the UbiC family.</text>
</comment>
<comment type="sequence caution" evidence="2">
    <conflict type="erroneous initiation">
        <sequence resource="EMBL-CDS" id="ABB68511"/>
    </conflict>
    <text>Extended N-terminus.</text>
</comment>
<protein>
    <recommendedName>
        <fullName evidence="1">Chorismate pyruvate-lyase</fullName>
        <shortName evidence="1">CL</shortName>
        <shortName evidence="1">CPL</shortName>
        <ecNumber evidence="1">4.1.3.40</ecNumber>
    </recommendedName>
</protein>
<dbReference type="EC" id="4.1.3.40" evidence="1"/>
<dbReference type="EMBL" id="CP000036">
    <property type="protein sequence ID" value="ABB68511.1"/>
    <property type="status" value="ALT_INIT"/>
    <property type="molecule type" value="Genomic_DNA"/>
</dbReference>
<dbReference type="RefSeq" id="WP_001295693.1">
    <property type="nucleotide sequence ID" value="NC_007613.1"/>
</dbReference>
<dbReference type="SMR" id="Q31TU7"/>
<dbReference type="KEGG" id="sbo:SBO_4078"/>
<dbReference type="HOGENOM" id="CLU_096824_1_0_6"/>
<dbReference type="UniPathway" id="UPA00232"/>
<dbReference type="Proteomes" id="UP000007067">
    <property type="component" value="Chromosome"/>
</dbReference>
<dbReference type="GO" id="GO:0005829">
    <property type="term" value="C:cytosol"/>
    <property type="evidence" value="ECO:0007669"/>
    <property type="project" value="TreeGrafter"/>
</dbReference>
<dbReference type="GO" id="GO:0008813">
    <property type="term" value="F:chorismate lyase activity"/>
    <property type="evidence" value="ECO:0007669"/>
    <property type="project" value="UniProtKB-UniRule"/>
</dbReference>
<dbReference type="GO" id="GO:0042866">
    <property type="term" value="P:pyruvate biosynthetic process"/>
    <property type="evidence" value="ECO:0007669"/>
    <property type="project" value="UniProtKB-UniRule"/>
</dbReference>
<dbReference type="GO" id="GO:0006744">
    <property type="term" value="P:ubiquinone biosynthetic process"/>
    <property type="evidence" value="ECO:0007669"/>
    <property type="project" value="UniProtKB-UniRule"/>
</dbReference>
<dbReference type="FunFam" id="3.40.1410.10:FF:000002">
    <property type="entry name" value="Chorismate pyruvate-lyase"/>
    <property type="match status" value="1"/>
</dbReference>
<dbReference type="Gene3D" id="3.40.1410.10">
    <property type="entry name" value="Chorismate lyase-like"/>
    <property type="match status" value="1"/>
</dbReference>
<dbReference type="HAMAP" id="MF_01632">
    <property type="entry name" value="UbiC"/>
    <property type="match status" value="1"/>
</dbReference>
<dbReference type="InterPro" id="IPR007440">
    <property type="entry name" value="Chorismate--pyruvate_lyase"/>
</dbReference>
<dbReference type="InterPro" id="IPR028978">
    <property type="entry name" value="Chorismate_lyase_/UTRA_dom_sf"/>
</dbReference>
<dbReference type="NCBIfam" id="NF008656">
    <property type="entry name" value="PRK11655.1"/>
    <property type="match status" value="1"/>
</dbReference>
<dbReference type="PANTHER" id="PTHR38683">
    <property type="entry name" value="CHORISMATE PYRUVATE-LYASE"/>
    <property type="match status" value="1"/>
</dbReference>
<dbReference type="PANTHER" id="PTHR38683:SF1">
    <property type="entry name" value="CHORISMATE PYRUVATE-LYASE"/>
    <property type="match status" value="1"/>
</dbReference>
<dbReference type="Pfam" id="PF04345">
    <property type="entry name" value="Chor_lyase"/>
    <property type="match status" value="1"/>
</dbReference>
<dbReference type="SUPFAM" id="SSF64288">
    <property type="entry name" value="Chorismate lyase-like"/>
    <property type="match status" value="1"/>
</dbReference>
<gene>
    <name evidence="1" type="primary">ubiC</name>
    <name type="ordered locus">SBO_4078</name>
</gene>
<name>UBIC_SHIBS</name>
<organism>
    <name type="scientific">Shigella boydii serotype 4 (strain Sb227)</name>
    <dbReference type="NCBI Taxonomy" id="300268"/>
    <lineage>
        <taxon>Bacteria</taxon>
        <taxon>Pseudomonadati</taxon>
        <taxon>Pseudomonadota</taxon>
        <taxon>Gammaproteobacteria</taxon>
        <taxon>Enterobacterales</taxon>
        <taxon>Enterobacteriaceae</taxon>
        <taxon>Shigella</taxon>
    </lineage>
</organism>
<accession>Q31TU7</accession>
<sequence length="165" mass="18821">MSHPALTQLRALRYFKEIPALDPQLLDWLLLEDSMTKRFEQQGKTVSVTMIREGFVEQNEIPEELPLLPKESRYWLREILLCADGEPWLAGRTVVPVSTLSGPELALQKLGKTPLGRYLFTSSTLTRDFIEIGRDAGLWGRRSRLRLSGKPLLLTELFLPASPLY</sequence>
<proteinExistence type="inferred from homology"/>
<feature type="chain" id="PRO_0000240573" description="Chorismate pyruvate-lyase">
    <location>
        <begin position="1"/>
        <end position="165"/>
    </location>
</feature>
<feature type="binding site" evidence="1">
    <location>
        <position position="35"/>
    </location>
    <ligand>
        <name>substrate</name>
    </ligand>
</feature>
<feature type="binding site" evidence="1">
    <location>
        <position position="77"/>
    </location>
    <ligand>
        <name>substrate</name>
    </ligand>
</feature>
<feature type="binding site" evidence="1">
    <location>
        <position position="115"/>
    </location>
    <ligand>
        <name>substrate</name>
    </ligand>
</feature>
<feature type="binding site" evidence="1">
    <location>
        <position position="156"/>
    </location>
    <ligand>
        <name>substrate</name>
    </ligand>
</feature>
<reference key="1">
    <citation type="journal article" date="2005" name="Nucleic Acids Res.">
        <title>Genome dynamics and diversity of Shigella species, the etiologic agents of bacillary dysentery.</title>
        <authorList>
            <person name="Yang F."/>
            <person name="Yang J."/>
            <person name="Zhang X."/>
            <person name="Chen L."/>
            <person name="Jiang Y."/>
            <person name="Yan Y."/>
            <person name="Tang X."/>
            <person name="Wang J."/>
            <person name="Xiong Z."/>
            <person name="Dong J."/>
            <person name="Xue Y."/>
            <person name="Zhu Y."/>
            <person name="Xu X."/>
            <person name="Sun L."/>
            <person name="Chen S."/>
            <person name="Nie H."/>
            <person name="Peng J."/>
            <person name="Xu J."/>
            <person name="Wang Y."/>
            <person name="Yuan Z."/>
            <person name="Wen Y."/>
            <person name="Yao Z."/>
            <person name="Shen Y."/>
            <person name="Qiang B."/>
            <person name="Hou Y."/>
            <person name="Yu J."/>
            <person name="Jin Q."/>
        </authorList>
    </citation>
    <scope>NUCLEOTIDE SEQUENCE [LARGE SCALE GENOMIC DNA]</scope>
    <source>
        <strain>Sb227</strain>
    </source>
</reference>
<evidence type="ECO:0000255" key="1">
    <source>
        <dbReference type="HAMAP-Rule" id="MF_01632"/>
    </source>
</evidence>
<evidence type="ECO:0000305" key="2"/>